<geneLocation type="chloroplast"/>
<sequence>MKNVTDSFVYLVGHCPFAGSFAFNTDILATNPINLSIVLGVLIFFGKGVLNDLLDNRKQRILSTIQNSEELRKKTIEQLERARDRLRKVEIEADEYRINGYSEIEREKTNLINATYDSLERLENYKNETLHFEQQRAINKVRQRVFQEALQGALGTLNSCLNSDLHFRTISANIGILGAMEEITD</sequence>
<accession>A6MMJ3</accession>
<proteinExistence type="inferred from homology"/>
<gene>
    <name evidence="1" type="primary">atpF</name>
</gene>
<reference key="1">
    <citation type="journal article" date="2007" name="Mol. Phylogenet. Evol.">
        <title>Phylogenetic and evolutionary implications of complete chloroplast genome sequences of four early-diverging angiosperms: Buxus (Buxaceae), Chloranthus (Chloranthaceae), Dioscorea (Dioscoreaceae), and Illicium (Schisandraceae).</title>
        <authorList>
            <person name="Hansen D.R."/>
            <person name="Dastidar S.G."/>
            <person name="Cai Z."/>
            <person name="Penaflor C."/>
            <person name="Kuehl J.V."/>
            <person name="Boore J.L."/>
            <person name="Jansen R.K."/>
        </authorList>
    </citation>
    <scope>NUCLEOTIDE SEQUENCE [LARGE SCALE GENOMIC DNA]</scope>
</reference>
<organism>
    <name type="scientific">Dioscorea elephantipes</name>
    <name type="common">Elephant's foot yam</name>
    <name type="synonym">Testudinaria elephantipes</name>
    <dbReference type="NCBI Taxonomy" id="145284"/>
    <lineage>
        <taxon>Eukaryota</taxon>
        <taxon>Viridiplantae</taxon>
        <taxon>Streptophyta</taxon>
        <taxon>Embryophyta</taxon>
        <taxon>Tracheophyta</taxon>
        <taxon>Spermatophyta</taxon>
        <taxon>Magnoliopsida</taxon>
        <taxon>Liliopsida</taxon>
        <taxon>Dioscoreales</taxon>
        <taxon>Dioscoreaceae</taxon>
        <taxon>Dioscorea</taxon>
    </lineage>
</organism>
<keyword id="KW-0066">ATP synthesis</keyword>
<keyword id="KW-0138">CF(0)</keyword>
<keyword id="KW-0150">Chloroplast</keyword>
<keyword id="KW-0375">Hydrogen ion transport</keyword>
<keyword id="KW-0406">Ion transport</keyword>
<keyword id="KW-0472">Membrane</keyword>
<keyword id="KW-0934">Plastid</keyword>
<keyword id="KW-0793">Thylakoid</keyword>
<keyword id="KW-0812">Transmembrane</keyword>
<keyword id="KW-1133">Transmembrane helix</keyword>
<keyword id="KW-0813">Transport</keyword>
<feature type="chain" id="PRO_0000368929" description="ATP synthase subunit b, chloroplastic">
    <location>
        <begin position="1"/>
        <end position="185"/>
    </location>
</feature>
<feature type="transmembrane region" description="Helical" evidence="1">
    <location>
        <begin position="7"/>
        <end position="29"/>
    </location>
</feature>
<dbReference type="EMBL" id="EF380353">
    <property type="protein sequence ID" value="ABR01416.1"/>
    <property type="molecule type" value="Genomic_DNA"/>
</dbReference>
<dbReference type="RefSeq" id="YP_001294338.1">
    <property type="nucleotide sequence ID" value="NC_009601.1"/>
</dbReference>
<dbReference type="SMR" id="A6MMJ3"/>
<dbReference type="GeneID" id="5236579"/>
<dbReference type="GO" id="GO:0009535">
    <property type="term" value="C:chloroplast thylakoid membrane"/>
    <property type="evidence" value="ECO:0007669"/>
    <property type="project" value="UniProtKB-SubCell"/>
</dbReference>
<dbReference type="GO" id="GO:0045259">
    <property type="term" value="C:proton-transporting ATP synthase complex"/>
    <property type="evidence" value="ECO:0007669"/>
    <property type="project" value="UniProtKB-KW"/>
</dbReference>
<dbReference type="GO" id="GO:0046933">
    <property type="term" value="F:proton-transporting ATP synthase activity, rotational mechanism"/>
    <property type="evidence" value="ECO:0007669"/>
    <property type="project" value="UniProtKB-UniRule"/>
</dbReference>
<dbReference type="CDD" id="cd06503">
    <property type="entry name" value="ATP-synt_Fo_b"/>
    <property type="match status" value="1"/>
</dbReference>
<dbReference type="HAMAP" id="MF_01398">
    <property type="entry name" value="ATP_synth_b_bprime"/>
    <property type="match status" value="1"/>
</dbReference>
<dbReference type="InterPro" id="IPR002146">
    <property type="entry name" value="ATP_synth_b/b'su_bac/chlpt"/>
</dbReference>
<dbReference type="PANTHER" id="PTHR34264">
    <property type="entry name" value="ATP SYNTHASE SUBUNIT B, CHLOROPLASTIC"/>
    <property type="match status" value="1"/>
</dbReference>
<dbReference type="PANTHER" id="PTHR34264:SF8">
    <property type="entry name" value="ATP SYNTHASE SUBUNIT B, CHLOROPLASTIC"/>
    <property type="match status" value="1"/>
</dbReference>
<dbReference type="Pfam" id="PF00430">
    <property type="entry name" value="ATP-synt_B"/>
    <property type="match status" value="1"/>
</dbReference>
<comment type="function">
    <text evidence="1">F(1)F(0) ATP synthase produces ATP from ADP in the presence of a proton or sodium gradient. F-type ATPases consist of two structural domains, F(1) containing the extramembraneous catalytic core and F(0) containing the membrane proton channel, linked together by a central stalk and a peripheral stalk. During catalysis, ATP synthesis in the catalytic domain of F(1) is coupled via a rotary mechanism of the central stalk subunits to proton translocation.</text>
</comment>
<comment type="function">
    <text evidence="1">Component of the F(0) channel, it forms part of the peripheral stalk, linking F(1) to F(0).</text>
</comment>
<comment type="subunit">
    <text evidence="1">F-type ATPases have 2 components, F(1) - the catalytic core - and F(0) - the membrane proton channel. F(1) has five subunits: alpha(3), beta(3), gamma(1), delta(1), epsilon(1). F(0) has four main subunits: a(1), b(1), b'(1) and c(10-14). The alpha and beta chains form an alternating ring which encloses part of the gamma chain. F(1) is attached to F(0) by a central stalk formed by the gamma and epsilon chains, while a peripheral stalk is formed by the delta, b and b' chains.</text>
</comment>
<comment type="subcellular location">
    <subcellularLocation>
        <location evidence="1">Plastid</location>
        <location evidence="1">Chloroplast thylakoid membrane</location>
        <topology evidence="1">Single-pass membrane protein</topology>
    </subcellularLocation>
</comment>
<comment type="miscellaneous">
    <text>In plastids the F-type ATPase is also known as CF(1)CF(0).</text>
</comment>
<comment type="similarity">
    <text evidence="1">Belongs to the ATPase B chain family.</text>
</comment>
<name>ATPF_DIOEL</name>
<evidence type="ECO:0000255" key="1">
    <source>
        <dbReference type="HAMAP-Rule" id="MF_01398"/>
    </source>
</evidence>
<protein>
    <recommendedName>
        <fullName evidence="1">ATP synthase subunit b, chloroplastic</fullName>
    </recommendedName>
    <alternativeName>
        <fullName evidence="1">ATP synthase F(0) sector subunit b</fullName>
    </alternativeName>
    <alternativeName>
        <fullName evidence="1">ATPase subunit I</fullName>
    </alternativeName>
</protein>